<reference key="1">
    <citation type="journal article" date="2002" name="Science">
        <title>50 million years of genomic stasis in endosymbiotic bacteria.</title>
        <authorList>
            <person name="Tamas I."/>
            <person name="Klasson L."/>
            <person name="Canbaeck B."/>
            <person name="Naeslund A.K."/>
            <person name="Eriksson A.-S."/>
            <person name="Wernegreen J.J."/>
            <person name="Sandstroem J.P."/>
            <person name="Moran N.A."/>
            <person name="Andersson S.G.E."/>
        </authorList>
    </citation>
    <scope>NUCLEOTIDE SEQUENCE [LARGE SCALE GENOMIC DNA]</scope>
    <source>
        <strain>Sg</strain>
    </source>
</reference>
<sequence>MNSFAMLFPGQGSQYKNMLSSFFQKKNNLFKKIFDEASEYVNYNLLNLIKNGAKKKRDDYKYIQSAILTSSIAIYQLWKEKNGRRPALMSGHSLGEYSALVCANAIKFSDALKIVKLRSKLMQKIIINKPSLVQAIIGLDKVIIKNICLQYLPKIVSIASINSDDQIIISGEKLAVREVGLKCKKKGAKYVIKLNINTPIHSQLMKPVSEQIKYLLKSIKIKSPQIPVINNVDVICEKNEKKIKKALVRQFYSTVRWKEIIDLIKSKKIFTMLEIGPNKILSNLIKKNDNITVLNTNNLKNFLIAFKTIH</sequence>
<proteinExistence type="inferred from homology"/>
<feature type="chain" id="PRO_0000194212" description="Malonyl CoA-acyl carrier protein transacylase">
    <location>
        <begin position="1"/>
        <end position="310"/>
    </location>
</feature>
<feature type="active site" evidence="1">
    <location>
        <position position="93"/>
    </location>
</feature>
<feature type="active site" evidence="1">
    <location>
        <position position="201"/>
    </location>
</feature>
<keyword id="KW-0012">Acyltransferase</keyword>
<keyword id="KW-0275">Fatty acid biosynthesis</keyword>
<keyword id="KW-0276">Fatty acid metabolism</keyword>
<keyword id="KW-0444">Lipid biosynthesis</keyword>
<keyword id="KW-0443">Lipid metabolism</keyword>
<keyword id="KW-0808">Transferase</keyword>
<name>FABD_BUCAP</name>
<comment type="catalytic activity">
    <reaction>
        <text>holo-[ACP] + malonyl-CoA = malonyl-[ACP] + CoA</text>
        <dbReference type="Rhea" id="RHEA:41792"/>
        <dbReference type="Rhea" id="RHEA-COMP:9623"/>
        <dbReference type="Rhea" id="RHEA-COMP:9685"/>
        <dbReference type="ChEBI" id="CHEBI:57287"/>
        <dbReference type="ChEBI" id="CHEBI:57384"/>
        <dbReference type="ChEBI" id="CHEBI:64479"/>
        <dbReference type="ChEBI" id="CHEBI:78449"/>
        <dbReference type="EC" id="2.3.1.39"/>
    </reaction>
</comment>
<comment type="pathway">
    <text>Lipid metabolism; fatty acid biosynthesis.</text>
</comment>
<comment type="similarity">
    <text evidence="2">Belongs to the FabD family.</text>
</comment>
<organism>
    <name type="scientific">Buchnera aphidicola subsp. Schizaphis graminum (strain Sg)</name>
    <dbReference type="NCBI Taxonomy" id="198804"/>
    <lineage>
        <taxon>Bacteria</taxon>
        <taxon>Pseudomonadati</taxon>
        <taxon>Pseudomonadota</taxon>
        <taxon>Gammaproteobacteria</taxon>
        <taxon>Enterobacterales</taxon>
        <taxon>Erwiniaceae</taxon>
        <taxon>Buchnera</taxon>
    </lineage>
</organism>
<protein>
    <recommendedName>
        <fullName>Malonyl CoA-acyl carrier protein transacylase</fullName>
        <shortName>MCT</shortName>
        <ecNumber>2.3.1.39</ecNumber>
    </recommendedName>
</protein>
<evidence type="ECO:0000250" key="1"/>
<evidence type="ECO:0000305" key="2"/>
<dbReference type="EC" id="2.3.1.39"/>
<dbReference type="EMBL" id="AE013218">
    <property type="protein sequence ID" value="AAM67892.1"/>
    <property type="molecule type" value="Genomic_DNA"/>
</dbReference>
<dbReference type="RefSeq" id="WP_011053859.1">
    <property type="nucleotide sequence ID" value="NC_004061.1"/>
</dbReference>
<dbReference type="SMR" id="Q8K9J6"/>
<dbReference type="STRING" id="198804.BUsg_338"/>
<dbReference type="GeneID" id="93003809"/>
<dbReference type="KEGG" id="bas:BUsg_338"/>
<dbReference type="eggNOG" id="COG0331">
    <property type="taxonomic scope" value="Bacteria"/>
</dbReference>
<dbReference type="HOGENOM" id="CLU_030558_0_0_6"/>
<dbReference type="UniPathway" id="UPA00094"/>
<dbReference type="Proteomes" id="UP000000416">
    <property type="component" value="Chromosome"/>
</dbReference>
<dbReference type="GO" id="GO:0005829">
    <property type="term" value="C:cytosol"/>
    <property type="evidence" value="ECO:0007669"/>
    <property type="project" value="TreeGrafter"/>
</dbReference>
<dbReference type="GO" id="GO:0004314">
    <property type="term" value="F:[acyl-carrier-protein] S-malonyltransferase activity"/>
    <property type="evidence" value="ECO:0007669"/>
    <property type="project" value="UniProtKB-EC"/>
</dbReference>
<dbReference type="GO" id="GO:0006633">
    <property type="term" value="P:fatty acid biosynthetic process"/>
    <property type="evidence" value="ECO:0007669"/>
    <property type="project" value="UniProtKB-UniPathway"/>
</dbReference>
<dbReference type="Gene3D" id="3.30.70.250">
    <property type="entry name" value="Malonyl-CoA ACP transacylase, ACP-binding"/>
    <property type="match status" value="1"/>
</dbReference>
<dbReference type="Gene3D" id="3.40.366.10">
    <property type="entry name" value="Malonyl-Coenzyme A Acyl Carrier Protein, domain 2"/>
    <property type="match status" value="1"/>
</dbReference>
<dbReference type="InterPro" id="IPR001227">
    <property type="entry name" value="Ac_transferase_dom_sf"/>
</dbReference>
<dbReference type="InterPro" id="IPR014043">
    <property type="entry name" value="Acyl_transferase_dom"/>
</dbReference>
<dbReference type="InterPro" id="IPR016035">
    <property type="entry name" value="Acyl_Trfase/lysoPLipase"/>
</dbReference>
<dbReference type="InterPro" id="IPR050858">
    <property type="entry name" value="Mal-CoA-ACP_Trans/PKS_FabD"/>
</dbReference>
<dbReference type="InterPro" id="IPR024925">
    <property type="entry name" value="Malonyl_CoA-ACP_transAc"/>
</dbReference>
<dbReference type="InterPro" id="IPR004410">
    <property type="entry name" value="Malonyl_CoA-ACP_transAc_FabD"/>
</dbReference>
<dbReference type="InterPro" id="IPR016036">
    <property type="entry name" value="Malonyl_transacylase_ACP-bd"/>
</dbReference>
<dbReference type="NCBIfam" id="TIGR00128">
    <property type="entry name" value="fabD"/>
    <property type="match status" value="1"/>
</dbReference>
<dbReference type="PANTHER" id="PTHR42681">
    <property type="entry name" value="MALONYL-COA-ACYL CARRIER PROTEIN TRANSACYLASE, MITOCHONDRIAL"/>
    <property type="match status" value="1"/>
</dbReference>
<dbReference type="PANTHER" id="PTHR42681:SF1">
    <property type="entry name" value="MALONYL-COA-ACYL CARRIER PROTEIN TRANSACYLASE, MITOCHONDRIAL"/>
    <property type="match status" value="1"/>
</dbReference>
<dbReference type="Pfam" id="PF00698">
    <property type="entry name" value="Acyl_transf_1"/>
    <property type="match status" value="1"/>
</dbReference>
<dbReference type="PIRSF" id="PIRSF000446">
    <property type="entry name" value="Mct"/>
    <property type="match status" value="1"/>
</dbReference>
<dbReference type="SMART" id="SM00827">
    <property type="entry name" value="PKS_AT"/>
    <property type="match status" value="1"/>
</dbReference>
<dbReference type="SUPFAM" id="SSF52151">
    <property type="entry name" value="FabD/lysophospholipase-like"/>
    <property type="match status" value="1"/>
</dbReference>
<dbReference type="SUPFAM" id="SSF55048">
    <property type="entry name" value="Probable ACP-binding domain of malonyl-CoA ACP transacylase"/>
    <property type="match status" value="1"/>
</dbReference>
<accession>Q8K9J6</accession>
<gene>
    <name type="primary">fabD</name>
    <name type="ordered locus">BUsg_338</name>
</gene>